<dbReference type="EC" id="6.3.2.6" evidence="1"/>
<dbReference type="EMBL" id="FM954972">
    <property type="protein sequence ID" value="CAV18331.1"/>
    <property type="molecule type" value="Genomic_DNA"/>
</dbReference>
<dbReference type="SMR" id="B7VMT0"/>
<dbReference type="STRING" id="575788.VS_1205"/>
<dbReference type="KEGG" id="vsp:VS_1205"/>
<dbReference type="PATRIC" id="fig|575788.5.peg.2524"/>
<dbReference type="eggNOG" id="COG0152">
    <property type="taxonomic scope" value="Bacteria"/>
</dbReference>
<dbReference type="HOGENOM" id="CLU_064197_0_0_6"/>
<dbReference type="UniPathway" id="UPA00074">
    <property type="reaction ID" value="UER00131"/>
</dbReference>
<dbReference type="Proteomes" id="UP000009100">
    <property type="component" value="Chromosome 1"/>
</dbReference>
<dbReference type="GO" id="GO:0005737">
    <property type="term" value="C:cytoplasm"/>
    <property type="evidence" value="ECO:0007669"/>
    <property type="project" value="TreeGrafter"/>
</dbReference>
<dbReference type="GO" id="GO:0005524">
    <property type="term" value="F:ATP binding"/>
    <property type="evidence" value="ECO:0007669"/>
    <property type="project" value="UniProtKB-KW"/>
</dbReference>
<dbReference type="GO" id="GO:0004639">
    <property type="term" value="F:phosphoribosylaminoimidazolesuccinocarboxamide synthase activity"/>
    <property type="evidence" value="ECO:0007669"/>
    <property type="project" value="UniProtKB-UniRule"/>
</dbReference>
<dbReference type="GO" id="GO:0006189">
    <property type="term" value="P:'de novo' IMP biosynthetic process"/>
    <property type="evidence" value="ECO:0007669"/>
    <property type="project" value="UniProtKB-UniRule"/>
</dbReference>
<dbReference type="CDD" id="cd01414">
    <property type="entry name" value="SAICAR_synt_Sc"/>
    <property type="match status" value="1"/>
</dbReference>
<dbReference type="Gene3D" id="3.30.470.20">
    <property type="entry name" value="ATP-grasp fold, B domain"/>
    <property type="match status" value="1"/>
</dbReference>
<dbReference type="Gene3D" id="3.30.200.20">
    <property type="entry name" value="Phosphorylase Kinase, domain 1"/>
    <property type="match status" value="1"/>
</dbReference>
<dbReference type="HAMAP" id="MF_00137">
    <property type="entry name" value="SAICAR_synth"/>
    <property type="match status" value="1"/>
</dbReference>
<dbReference type="InterPro" id="IPR028923">
    <property type="entry name" value="SAICAR_synt/ADE2_N"/>
</dbReference>
<dbReference type="InterPro" id="IPR014106">
    <property type="entry name" value="SAICAR_synthase_Vibrio-typ"/>
</dbReference>
<dbReference type="NCBIfam" id="NF010567">
    <property type="entry name" value="PRK13960.1"/>
    <property type="match status" value="1"/>
</dbReference>
<dbReference type="NCBIfam" id="TIGR02735">
    <property type="entry name" value="purC_vibrio"/>
    <property type="match status" value="1"/>
</dbReference>
<dbReference type="PANTHER" id="PTHR43700">
    <property type="entry name" value="PHOSPHORIBOSYLAMINOIMIDAZOLE-SUCCINOCARBOXAMIDE SYNTHASE"/>
    <property type="match status" value="1"/>
</dbReference>
<dbReference type="PANTHER" id="PTHR43700:SF1">
    <property type="entry name" value="PHOSPHORIBOSYLAMINOIMIDAZOLE-SUCCINOCARBOXAMIDE SYNTHASE"/>
    <property type="match status" value="1"/>
</dbReference>
<dbReference type="Pfam" id="PF01259">
    <property type="entry name" value="SAICAR_synt"/>
    <property type="match status" value="1"/>
</dbReference>
<dbReference type="SUPFAM" id="SSF56104">
    <property type="entry name" value="SAICAR synthase-like"/>
    <property type="match status" value="1"/>
</dbReference>
<evidence type="ECO:0000255" key="1">
    <source>
        <dbReference type="HAMAP-Rule" id="MF_00137"/>
    </source>
</evidence>
<proteinExistence type="inferred from homology"/>
<reference key="1">
    <citation type="submission" date="2009-02" db="EMBL/GenBank/DDBJ databases">
        <title>Vibrio splendidus str. LGP32 complete genome.</title>
        <authorList>
            <person name="Mazel D."/>
            <person name="Le Roux F."/>
        </authorList>
    </citation>
    <scope>NUCLEOTIDE SEQUENCE [LARGE SCALE GENOMIC DNA]</scope>
    <source>
        <strain>LGP32</strain>
    </source>
</reference>
<comment type="catalytic activity">
    <reaction evidence="1">
        <text>5-amino-1-(5-phospho-D-ribosyl)imidazole-4-carboxylate + L-aspartate + ATP = (2S)-2-[5-amino-1-(5-phospho-beta-D-ribosyl)imidazole-4-carboxamido]succinate + ADP + phosphate + 2 H(+)</text>
        <dbReference type="Rhea" id="RHEA:22628"/>
        <dbReference type="ChEBI" id="CHEBI:15378"/>
        <dbReference type="ChEBI" id="CHEBI:29991"/>
        <dbReference type="ChEBI" id="CHEBI:30616"/>
        <dbReference type="ChEBI" id="CHEBI:43474"/>
        <dbReference type="ChEBI" id="CHEBI:58443"/>
        <dbReference type="ChEBI" id="CHEBI:77657"/>
        <dbReference type="ChEBI" id="CHEBI:456216"/>
        <dbReference type="EC" id="6.3.2.6"/>
    </reaction>
</comment>
<comment type="pathway">
    <text evidence="1">Purine metabolism; IMP biosynthesis via de novo pathway; 5-amino-1-(5-phospho-D-ribosyl)imidazole-4-carboxamide from 5-amino-1-(5-phospho-D-ribosyl)imidazole-4-carboxylate: step 1/2.</text>
</comment>
<comment type="similarity">
    <text evidence="1">Belongs to the SAICAR synthetase family.</text>
</comment>
<accession>B7VMT0</accession>
<feature type="chain" id="PRO_1000122939" description="Phosphoribosylaminoimidazole-succinocarboxamide synthase">
    <location>
        <begin position="1"/>
        <end position="367"/>
    </location>
</feature>
<protein>
    <recommendedName>
        <fullName evidence="1">Phosphoribosylaminoimidazole-succinocarboxamide synthase</fullName>
        <ecNumber evidence="1">6.3.2.6</ecNumber>
    </recommendedName>
    <alternativeName>
        <fullName evidence="1">SAICAR synthetase</fullName>
    </alternativeName>
</protein>
<gene>
    <name evidence="1" type="primary">purC</name>
    <name type="ordered locus">VS_1205</name>
</gene>
<keyword id="KW-0067">ATP-binding</keyword>
<keyword id="KW-0436">Ligase</keyword>
<keyword id="KW-0547">Nucleotide-binding</keyword>
<keyword id="KW-0658">Purine biosynthesis</keyword>
<organism>
    <name type="scientific">Vibrio atlanticus (strain LGP32)</name>
    <name type="common">Vibrio splendidus (strain Mel32)</name>
    <dbReference type="NCBI Taxonomy" id="575788"/>
    <lineage>
        <taxon>Bacteria</taxon>
        <taxon>Pseudomonadati</taxon>
        <taxon>Pseudomonadota</taxon>
        <taxon>Gammaproteobacteria</taxon>
        <taxon>Vibrionales</taxon>
        <taxon>Vibrionaceae</taxon>
        <taxon>Vibrio</taxon>
    </lineage>
</organism>
<sequence>MSLADQVLAVNDDLPIRTDKPVHSGKVRSVYWLTEEDSQRLIKEKGYDVAPDAPLAIMVISDRISAFDCIWRGEGNLKGVPGKGAALNAISNHWFKLFKDNGLADSHILDIPHPFVWIVQKARPVMIEAICRQYITGSMWRAYANGEREFCGIEMPEGLEKDKKLPELLITPSTKGILKGIPGVPEADDVNITRNNIEDNFAAFNFTQASDIAHYEKLLKEGFNVISQALANVDQTFVDTKFEFGYVNDAQGKEKLIYMDEVGTPDSSRIWDTQEYNKGNIVENSKEGFRQFLLNYFPDADILLNKERMPEREALARDNELPLDSLMSLSRTYLDIAAKITGAEIVLSENPKQEIIDVLRADYGLID</sequence>
<name>PUR7_VIBA3</name>